<comment type="caution">
    <text evidence="2">Product of a dubious gene prediction unlikely to encode a functional protein. Because of that it is not part of the S.cerevisiae S288c complete/reference proteome set.</text>
</comment>
<organism>
    <name type="scientific">Saccharomyces cerevisiae (strain ATCC 204508 / S288c)</name>
    <name type="common">Baker's yeast</name>
    <dbReference type="NCBI Taxonomy" id="559292"/>
    <lineage>
        <taxon>Eukaryota</taxon>
        <taxon>Fungi</taxon>
        <taxon>Dikarya</taxon>
        <taxon>Ascomycota</taxon>
        <taxon>Saccharomycotina</taxon>
        <taxon>Saccharomycetes</taxon>
        <taxon>Saccharomycetales</taxon>
        <taxon>Saccharomycetaceae</taxon>
        <taxon>Saccharomyces</taxon>
    </lineage>
</organism>
<dbReference type="EMBL" id="U17246">
    <property type="protein sequence ID" value="AAB67459.1"/>
    <property type="molecule type" value="Genomic_DNA"/>
</dbReference>
<dbReference type="PIR" id="S51429">
    <property type="entry name" value="S51429"/>
</dbReference>
<dbReference type="STRING" id="4932.YLR184W"/>
<dbReference type="PaxDb" id="4932-YLR184W"/>
<dbReference type="EnsemblFungi" id="YLR184W_mRNA">
    <property type="protein sequence ID" value="YLR184W"/>
    <property type="gene ID" value="YLR184W"/>
</dbReference>
<dbReference type="AGR" id="SGD:S000004174"/>
<dbReference type="SGD" id="S000004174">
    <property type="gene designation" value="YLR184W"/>
</dbReference>
<dbReference type="HOGENOM" id="CLU_2122978_0_0_1"/>
<accession>Q06267</accession>
<proteinExistence type="uncertain"/>
<protein>
    <recommendedName>
        <fullName>Putative uncharacterized protein YLR184W</fullName>
    </recommendedName>
</protein>
<gene>
    <name type="ordered locus">YLR184W</name>
    <name type="ORF">L9470.7</name>
</gene>
<sequence length="115" mass="13564">MKVEKEFPLMNFSLRRLPLFILIKTRKQTIEMNLRKKGHGIFFSRFGVFISKKKNHINICTLLLTKHPYTKGFPRQNVVETILFRRNSKTHFGRPATRRRPLGEREVNPSARSLG</sequence>
<evidence type="ECO:0000256" key="1">
    <source>
        <dbReference type="SAM" id="MobiDB-lite"/>
    </source>
</evidence>
<evidence type="ECO:0000305" key="2">
    <source>
    </source>
</evidence>
<reference key="1">
    <citation type="journal article" date="1997" name="Nature">
        <title>The nucleotide sequence of Saccharomyces cerevisiae chromosome XII.</title>
        <authorList>
            <person name="Johnston M."/>
            <person name="Hillier L.W."/>
            <person name="Riles L."/>
            <person name="Albermann K."/>
            <person name="Andre B."/>
            <person name="Ansorge W."/>
            <person name="Benes V."/>
            <person name="Brueckner M."/>
            <person name="Delius H."/>
            <person name="Dubois E."/>
            <person name="Duesterhoeft A."/>
            <person name="Entian K.-D."/>
            <person name="Floeth M."/>
            <person name="Goffeau A."/>
            <person name="Hebling U."/>
            <person name="Heumann K."/>
            <person name="Heuss-Neitzel D."/>
            <person name="Hilbert H."/>
            <person name="Hilger F."/>
            <person name="Kleine K."/>
            <person name="Koetter P."/>
            <person name="Louis E.J."/>
            <person name="Messenguy F."/>
            <person name="Mewes H.-W."/>
            <person name="Miosga T."/>
            <person name="Moestl D."/>
            <person name="Mueller-Auer S."/>
            <person name="Nentwich U."/>
            <person name="Obermaier B."/>
            <person name="Piravandi E."/>
            <person name="Pohl T.M."/>
            <person name="Portetelle D."/>
            <person name="Purnelle B."/>
            <person name="Rechmann S."/>
            <person name="Rieger M."/>
            <person name="Rinke M."/>
            <person name="Rose M."/>
            <person name="Scharfe M."/>
            <person name="Scherens B."/>
            <person name="Scholler P."/>
            <person name="Schwager C."/>
            <person name="Schwarz S."/>
            <person name="Underwood A.P."/>
            <person name="Urrestarazu L.A."/>
            <person name="Vandenbol M."/>
            <person name="Verhasselt P."/>
            <person name="Vierendeels F."/>
            <person name="Voet M."/>
            <person name="Volckaert G."/>
            <person name="Voss H."/>
            <person name="Wambutt R."/>
            <person name="Wedler E."/>
            <person name="Wedler H."/>
            <person name="Zimmermann F.K."/>
            <person name="Zollner A."/>
            <person name="Hani J."/>
            <person name="Hoheisel J.D."/>
        </authorList>
    </citation>
    <scope>NUCLEOTIDE SEQUENCE [LARGE SCALE GENOMIC DNA]</scope>
    <source>
        <strain>ATCC 204508 / S288c</strain>
    </source>
</reference>
<reference key="2">
    <citation type="journal article" date="2014" name="G3 (Bethesda)">
        <title>The reference genome sequence of Saccharomyces cerevisiae: Then and now.</title>
        <authorList>
            <person name="Engel S.R."/>
            <person name="Dietrich F.S."/>
            <person name="Fisk D.G."/>
            <person name="Binkley G."/>
            <person name="Balakrishnan R."/>
            <person name="Costanzo M.C."/>
            <person name="Dwight S.S."/>
            <person name="Hitz B.C."/>
            <person name="Karra K."/>
            <person name="Nash R.S."/>
            <person name="Weng S."/>
            <person name="Wong E.D."/>
            <person name="Lloyd P."/>
            <person name="Skrzypek M.S."/>
            <person name="Miyasato S.R."/>
            <person name="Simison M."/>
            <person name="Cherry J.M."/>
        </authorList>
    </citation>
    <scope>GENOME REANNOTATION</scope>
    <source>
        <strain>ATCC 204508 / S288c</strain>
    </source>
</reference>
<name>YL184_YEAST</name>
<feature type="chain" id="PRO_0000299620" description="Putative uncharacterized protein YLR184W">
    <location>
        <begin position="1"/>
        <end position="115"/>
    </location>
</feature>
<feature type="region of interest" description="Disordered" evidence="1">
    <location>
        <begin position="90"/>
        <end position="115"/>
    </location>
</feature>
<feature type="compositionally biased region" description="Basic residues" evidence="1">
    <location>
        <begin position="90"/>
        <end position="100"/>
    </location>
</feature>